<comment type="function">
    <text evidence="3">Catalyzes the oxidation of glycolate to glyoxylate, with a reduction of O2 to H2O2. Is a key enzyme in photorespiration in green plants.</text>
</comment>
<comment type="catalytic activity">
    <reaction evidence="3">
        <text>glycolate + O2 = glyoxylate + H2O2</text>
        <dbReference type="Rhea" id="RHEA:25311"/>
        <dbReference type="ChEBI" id="CHEBI:15379"/>
        <dbReference type="ChEBI" id="CHEBI:16240"/>
        <dbReference type="ChEBI" id="CHEBI:29805"/>
        <dbReference type="ChEBI" id="CHEBI:36655"/>
        <dbReference type="EC" id="1.1.3.15"/>
    </reaction>
    <physiologicalReaction direction="left-to-right" evidence="3">
        <dbReference type="Rhea" id="RHEA:25312"/>
    </physiologicalReaction>
</comment>
<comment type="cofactor">
    <cofactor evidence="2">
        <name>FMN</name>
        <dbReference type="ChEBI" id="CHEBI:58210"/>
    </cofactor>
</comment>
<comment type="pathway">
    <text evidence="3">Photosynthesis; photorespiration; glycine from 2-phosphoglycolate: step 2/3.</text>
</comment>
<comment type="subunit">
    <text evidence="2">Homotetramer.</text>
</comment>
<comment type="subcellular location">
    <subcellularLocation>
        <location evidence="1">Peroxisome</location>
    </subcellularLocation>
</comment>
<comment type="alternative products">
    <event type="alternative splicing"/>
    <isoform>
        <id>O49506-1</id>
        <name>1</name>
        <sequence type="displayed"/>
    </isoform>
    <isoform>
        <id>O49506-2</id>
        <name>2</name>
        <sequence type="described" ref="VSP_040388 VSP_040389"/>
    </isoform>
</comment>
<comment type="similarity">
    <text evidence="5">Belongs to the FMN-dependent alpha-hydroxy acid dehydrogenase family.</text>
</comment>
<proteinExistence type="evidence at protein level"/>
<organism>
    <name type="scientific">Arabidopsis thaliana</name>
    <name type="common">Mouse-ear cress</name>
    <dbReference type="NCBI Taxonomy" id="3702"/>
    <lineage>
        <taxon>Eukaryota</taxon>
        <taxon>Viridiplantae</taxon>
        <taxon>Streptophyta</taxon>
        <taxon>Embryophyta</taxon>
        <taxon>Tracheophyta</taxon>
        <taxon>Spermatophyta</taxon>
        <taxon>Magnoliopsida</taxon>
        <taxon>eudicotyledons</taxon>
        <taxon>Gunneridae</taxon>
        <taxon>Pentapetalae</taxon>
        <taxon>rosids</taxon>
        <taxon>malvids</taxon>
        <taxon>Brassicales</taxon>
        <taxon>Brassicaceae</taxon>
        <taxon>Camelineae</taxon>
        <taxon>Arabidopsis</taxon>
    </lineage>
</organism>
<reference key="1">
    <citation type="journal article" date="1999" name="Nature">
        <title>Sequence and analysis of chromosome 4 of the plant Arabidopsis thaliana.</title>
        <authorList>
            <person name="Mayer K.F.X."/>
            <person name="Schueller C."/>
            <person name="Wambutt R."/>
            <person name="Murphy G."/>
            <person name="Volckaert G."/>
            <person name="Pohl T."/>
            <person name="Duesterhoeft A."/>
            <person name="Stiekema W."/>
            <person name="Entian K.-D."/>
            <person name="Terryn N."/>
            <person name="Harris B."/>
            <person name="Ansorge W."/>
            <person name="Brandt P."/>
            <person name="Grivell L.A."/>
            <person name="Rieger M."/>
            <person name="Weichselgartner M."/>
            <person name="de Simone V."/>
            <person name="Obermaier B."/>
            <person name="Mache R."/>
            <person name="Mueller M."/>
            <person name="Kreis M."/>
            <person name="Delseny M."/>
            <person name="Puigdomenech P."/>
            <person name="Watson M."/>
            <person name="Schmidtheini T."/>
            <person name="Reichert B."/>
            <person name="Portetelle D."/>
            <person name="Perez-Alonso M."/>
            <person name="Boutry M."/>
            <person name="Bancroft I."/>
            <person name="Vos P."/>
            <person name="Hoheisel J."/>
            <person name="Zimmermann W."/>
            <person name="Wedler H."/>
            <person name="Ridley P."/>
            <person name="Langham S.-A."/>
            <person name="McCullagh B."/>
            <person name="Bilham L."/>
            <person name="Robben J."/>
            <person name="van der Schueren J."/>
            <person name="Grymonprez B."/>
            <person name="Chuang Y.-J."/>
            <person name="Vandenbussche F."/>
            <person name="Braeken M."/>
            <person name="Weltjens I."/>
            <person name="Voet M."/>
            <person name="Bastiaens I."/>
            <person name="Aert R."/>
            <person name="Defoor E."/>
            <person name="Weitzenegger T."/>
            <person name="Bothe G."/>
            <person name="Ramsperger U."/>
            <person name="Hilbert H."/>
            <person name="Braun M."/>
            <person name="Holzer E."/>
            <person name="Brandt A."/>
            <person name="Peters S."/>
            <person name="van Staveren M."/>
            <person name="Dirkse W."/>
            <person name="Mooijman P."/>
            <person name="Klein Lankhorst R."/>
            <person name="Rose M."/>
            <person name="Hauf J."/>
            <person name="Koetter P."/>
            <person name="Berneiser S."/>
            <person name="Hempel S."/>
            <person name="Feldpausch M."/>
            <person name="Lamberth S."/>
            <person name="Van den Daele H."/>
            <person name="De Keyser A."/>
            <person name="Buysshaert C."/>
            <person name="Gielen J."/>
            <person name="Villarroel R."/>
            <person name="De Clercq R."/>
            <person name="van Montagu M."/>
            <person name="Rogers J."/>
            <person name="Cronin A."/>
            <person name="Quail M.A."/>
            <person name="Bray-Allen S."/>
            <person name="Clark L."/>
            <person name="Doggett J."/>
            <person name="Hall S."/>
            <person name="Kay M."/>
            <person name="Lennard N."/>
            <person name="McLay K."/>
            <person name="Mayes R."/>
            <person name="Pettett A."/>
            <person name="Rajandream M.A."/>
            <person name="Lyne M."/>
            <person name="Benes V."/>
            <person name="Rechmann S."/>
            <person name="Borkova D."/>
            <person name="Bloecker H."/>
            <person name="Scharfe M."/>
            <person name="Grimm M."/>
            <person name="Loehnert T.-H."/>
            <person name="Dose S."/>
            <person name="de Haan M."/>
            <person name="Maarse A.C."/>
            <person name="Schaefer M."/>
            <person name="Mueller-Auer S."/>
            <person name="Gabel C."/>
            <person name="Fuchs M."/>
            <person name="Fartmann B."/>
            <person name="Granderath K."/>
            <person name="Dauner D."/>
            <person name="Herzl A."/>
            <person name="Neumann S."/>
            <person name="Argiriou A."/>
            <person name="Vitale D."/>
            <person name="Liguori R."/>
            <person name="Piravandi E."/>
            <person name="Massenet O."/>
            <person name="Quigley F."/>
            <person name="Clabauld G."/>
            <person name="Muendlein A."/>
            <person name="Felber R."/>
            <person name="Schnabl S."/>
            <person name="Hiller R."/>
            <person name="Schmidt W."/>
            <person name="Lecharny A."/>
            <person name="Aubourg S."/>
            <person name="Chefdor F."/>
            <person name="Cooke R."/>
            <person name="Berger C."/>
            <person name="Monfort A."/>
            <person name="Casacuberta E."/>
            <person name="Gibbons T."/>
            <person name="Weber N."/>
            <person name="Vandenbol M."/>
            <person name="Bargues M."/>
            <person name="Terol J."/>
            <person name="Torres A."/>
            <person name="Perez-Perez A."/>
            <person name="Purnelle B."/>
            <person name="Bent E."/>
            <person name="Johnson S."/>
            <person name="Tacon D."/>
            <person name="Jesse T."/>
            <person name="Heijnen L."/>
            <person name="Schwarz S."/>
            <person name="Scholler P."/>
            <person name="Heber S."/>
            <person name="Francs P."/>
            <person name="Bielke C."/>
            <person name="Frishman D."/>
            <person name="Haase D."/>
            <person name="Lemcke K."/>
            <person name="Mewes H.-W."/>
            <person name="Stocker S."/>
            <person name="Zaccaria P."/>
            <person name="Bevan M."/>
            <person name="Wilson R.K."/>
            <person name="de la Bastide M."/>
            <person name="Habermann K."/>
            <person name="Parnell L."/>
            <person name="Dedhia N."/>
            <person name="Gnoj L."/>
            <person name="Schutz K."/>
            <person name="Huang E."/>
            <person name="Spiegel L."/>
            <person name="Sekhon M."/>
            <person name="Murray J."/>
            <person name="Sheet P."/>
            <person name="Cordes M."/>
            <person name="Abu-Threideh J."/>
            <person name="Stoneking T."/>
            <person name="Kalicki J."/>
            <person name="Graves T."/>
            <person name="Harmon G."/>
            <person name="Edwards J."/>
            <person name="Latreille P."/>
            <person name="Courtney L."/>
            <person name="Cloud J."/>
            <person name="Abbott A."/>
            <person name="Scott K."/>
            <person name="Johnson D."/>
            <person name="Minx P."/>
            <person name="Bentley D."/>
            <person name="Fulton B."/>
            <person name="Miller N."/>
            <person name="Greco T."/>
            <person name="Kemp K."/>
            <person name="Kramer J."/>
            <person name="Fulton L."/>
            <person name="Mardis E."/>
            <person name="Dante M."/>
            <person name="Pepin K."/>
            <person name="Hillier L.W."/>
            <person name="Nelson J."/>
            <person name="Spieth J."/>
            <person name="Ryan E."/>
            <person name="Andrews S."/>
            <person name="Geisel C."/>
            <person name="Layman D."/>
            <person name="Du H."/>
            <person name="Ali J."/>
            <person name="Berghoff A."/>
            <person name="Jones K."/>
            <person name="Drone K."/>
            <person name="Cotton M."/>
            <person name="Joshu C."/>
            <person name="Antonoiu B."/>
            <person name="Zidanic M."/>
            <person name="Strong C."/>
            <person name="Sun H."/>
            <person name="Lamar B."/>
            <person name="Yordan C."/>
            <person name="Ma P."/>
            <person name="Zhong J."/>
            <person name="Preston R."/>
            <person name="Vil D."/>
            <person name="Shekher M."/>
            <person name="Matero A."/>
            <person name="Shah R."/>
            <person name="Swaby I.K."/>
            <person name="O'Shaughnessy A."/>
            <person name="Rodriguez M."/>
            <person name="Hoffman J."/>
            <person name="Till S."/>
            <person name="Granat S."/>
            <person name="Shohdy N."/>
            <person name="Hasegawa A."/>
            <person name="Hameed A."/>
            <person name="Lodhi M."/>
            <person name="Johnson A."/>
            <person name="Chen E."/>
            <person name="Marra M.A."/>
            <person name="Martienssen R."/>
            <person name="McCombie W.R."/>
        </authorList>
    </citation>
    <scope>NUCLEOTIDE SEQUENCE [LARGE SCALE GENOMIC DNA]</scope>
    <source>
        <strain>cv. Columbia</strain>
    </source>
</reference>
<reference key="2">
    <citation type="journal article" date="2017" name="Plant J.">
        <title>Araport11: a complete reannotation of the Arabidopsis thaliana reference genome.</title>
        <authorList>
            <person name="Cheng C.Y."/>
            <person name="Krishnakumar V."/>
            <person name="Chan A.P."/>
            <person name="Thibaud-Nissen F."/>
            <person name="Schobel S."/>
            <person name="Town C.D."/>
        </authorList>
    </citation>
    <scope>GENOME REANNOTATION</scope>
    <source>
        <strain>cv. Columbia</strain>
    </source>
</reference>
<reference key="3">
    <citation type="journal article" date="2003" name="Science">
        <title>Empirical analysis of transcriptional activity in the Arabidopsis genome.</title>
        <authorList>
            <person name="Yamada K."/>
            <person name="Lim J."/>
            <person name="Dale J.M."/>
            <person name="Chen H."/>
            <person name="Shinn P."/>
            <person name="Palm C.J."/>
            <person name="Southwick A.M."/>
            <person name="Wu H.C."/>
            <person name="Kim C.J."/>
            <person name="Nguyen M."/>
            <person name="Pham P.K."/>
            <person name="Cheuk R.F."/>
            <person name="Karlin-Newmann G."/>
            <person name="Liu S.X."/>
            <person name="Lam B."/>
            <person name="Sakano H."/>
            <person name="Wu T."/>
            <person name="Yu G."/>
            <person name="Miranda M."/>
            <person name="Quach H.L."/>
            <person name="Tripp M."/>
            <person name="Chang C.H."/>
            <person name="Lee J.M."/>
            <person name="Toriumi M.J."/>
            <person name="Chan M.M."/>
            <person name="Tang C.C."/>
            <person name="Onodera C.S."/>
            <person name="Deng J.M."/>
            <person name="Akiyama K."/>
            <person name="Ansari Y."/>
            <person name="Arakawa T."/>
            <person name="Banh J."/>
            <person name="Banno F."/>
            <person name="Bowser L."/>
            <person name="Brooks S.Y."/>
            <person name="Carninci P."/>
            <person name="Chao Q."/>
            <person name="Choy N."/>
            <person name="Enju A."/>
            <person name="Goldsmith A.D."/>
            <person name="Gurjal M."/>
            <person name="Hansen N.F."/>
            <person name="Hayashizaki Y."/>
            <person name="Johnson-Hopson C."/>
            <person name="Hsuan V.W."/>
            <person name="Iida K."/>
            <person name="Karnes M."/>
            <person name="Khan S."/>
            <person name="Koesema E."/>
            <person name="Ishida J."/>
            <person name="Jiang P.X."/>
            <person name="Jones T."/>
            <person name="Kawai J."/>
            <person name="Kamiya A."/>
            <person name="Meyers C."/>
            <person name="Nakajima M."/>
            <person name="Narusaka M."/>
            <person name="Seki M."/>
            <person name="Sakurai T."/>
            <person name="Satou M."/>
            <person name="Tamse R."/>
            <person name="Vaysberg M."/>
            <person name="Wallender E.K."/>
            <person name="Wong C."/>
            <person name="Yamamura Y."/>
            <person name="Yuan S."/>
            <person name="Shinozaki K."/>
            <person name="Davis R.W."/>
            <person name="Theologis A."/>
            <person name="Ecker J.R."/>
        </authorList>
    </citation>
    <scope>NUCLEOTIDE SEQUENCE [LARGE SCALE MRNA] (ISOFORM 1)</scope>
    <source>
        <strain>cv. Columbia</strain>
    </source>
</reference>
<reference key="4">
    <citation type="journal article" date="2009" name="J. Exp. Bot.">
        <title>Inducible antisense suppression of glycolate oxidase reveals its strong regulation over photosynthesis in rice.</title>
        <authorList>
            <person name="Xu H.-W."/>
            <person name="Zhang J."/>
            <person name="Zeng J."/>
            <person name="Jiang L."/>
            <person name="Liu E."/>
            <person name="Peng C."/>
            <person name="He Z.-H."/>
            <person name="Peng X.-X."/>
        </authorList>
    </citation>
    <scope>GENE FAMILY</scope>
    <scope>NOMENCLATURE</scope>
</reference>
<reference key="5">
    <citation type="journal article" date="2012" name="Mol. Cell. Proteomics">
        <title>Comparative large-scale characterisation of plant vs. mammal proteins reveals similar and idiosyncratic N-alpha acetylation features.</title>
        <authorList>
            <person name="Bienvenut W.V."/>
            <person name="Sumpton D."/>
            <person name="Martinez A."/>
            <person name="Lilla S."/>
            <person name="Espagne C."/>
            <person name="Meinnel T."/>
            <person name="Giglione C."/>
        </authorList>
    </citation>
    <scope>ACETYLATION [LARGE SCALE ANALYSIS] AT MET-1</scope>
    <scope>IDENTIFICATION BY MASS SPECTROMETRY [LARGE SCALE ANALYSIS]</scope>
</reference>
<evidence type="ECO:0000250" key="1"/>
<evidence type="ECO:0000250" key="2">
    <source>
        <dbReference type="UniProtKB" id="P05414"/>
    </source>
</evidence>
<evidence type="ECO:0000250" key="3">
    <source>
        <dbReference type="UniProtKB" id="Q9LRR9"/>
    </source>
</evidence>
<evidence type="ECO:0000250" key="4">
    <source>
        <dbReference type="UniProtKB" id="Q9UJM8"/>
    </source>
</evidence>
<evidence type="ECO:0000255" key="5">
    <source>
        <dbReference type="PROSITE-ProRule" id="PRU00683"/>
    </source>
</evidence>
<evidence type="ECO:0000305" key="6"/>
<evidence type="ECO:0007744" key="7">
    <source>
    </source>
</evidence>
<keyword id="KW-0007">Acetylation</keyword>
<keyword id="KW-0025">Alternative splicing</keyword>
<keyword id="KW-0285">Flavoprotein</keyword>
<keyword id="KW-0288">FMN</keyword>
<keyword id="KW-0323">Glycolate pathway</keyword>
<keyword id="KW-0560">Oxidoreductase</keyword>
<keyword id="KW-0576">Peroxisome</keyword>
<keyword id="KW-0601">Photorespiration</keyword>
<keyword id="KW-1185">Reference proteome</keyword>
<gene>
    <name type="primary">GLO5</name>
    <name type="synonym">GOX3</name>
    <name type="ordered locus">At4g18360</name>
    <name type="ORF">F28J12.20</name>
</gene>
<accession>O49506</accession>
<accession>A8MRC3</accession>
<name>GLO5_ARATH</name>
<protein>
    <recommendedName>
        <fullName>Glycolate oxidase 3</fullName>
        <shortName>GOX 3</shortName>
        <ecNumber evidence="3">1.1.3.15</ecNumber>
    </recommendedName>
    <alternativeName>
        <fullName>AtGLO5</fullName>
    </alternativeName>
    <alternativeName>
        <fullName>Peroxisomal (S)-2-hydroxy-acid oxidase GLO5</fullName>
    </alternativeName>
    <alternativeName>
        <fullName>Short chain alpha-hydroxy acid oxidase GLO5</fullName>
    </alternativeName>
</protein>
<sequence>MEITNVMEYEKIAKEKLPKMVYDYYASGAEDQWTLQENRNAFSRILFRPRILIDVSKIDVSTTVLGFNISMPIMIAPTAMQKMAHPDGELATARATSAAGTIMTLSSWATCSVEEVASTGPGIRFFQLYVYKDRNVVIQLVKRAEEAGFKAIALTVDTPRLGRRESDIKNRFALPRGLTLKNFEGLDLGKIDKTNDSGLASYVAGQVDQSLSWKDIKWLQSITSLPILVKGVITAEDARIAVEYGAAGIIVSNHGARQLDYVPATIVALEEVVKAVEGRIPVFLDGGVRRGTDVFKALALGASGVFVGRPSLFSLAADGEAGVRKMLQMLRDEFELTMALSGCRSLREISRTHIKTDWDTPHYLSAKL</sequence>
<dbReference type="EC" id="1.1.3.15" evidence="3"/>
<dbReference type="EMBL" id="AL021710">
    <property type="protein sequence ID" value="CAA16716.1"/>
    <property type="molecule type" value="Genomic_DNA"/>
</dbReference>
<dbReference type="EMBL" id="AL161548">
    <property type="protein sequence ID" value="CAB78838.1"/>
    <property type="molecule type" value="Genomic_DNA"/>
</dbReference>
<dbReference type="EMBL" id="CP002687">
    <property type="protein sequence ID" value="AEE84031.1"/>
    <property type="molecule type" value="Genomic_DNA"/>
</dbReference>
<dbReference type="EMBL" id="CP002687">
    <property type="protein sequence ID" value="AEE84032.1"/>
    <property type="molecule type" value="Genomic_DNA"/>
</dbReference>
<dbReference type="EMBL" id="CP002687">
    <property type="protein sequence ID" value="ANM68137.1"/>
    <property type="molecule type" value="Genomic_DNA"/>
</dbReference>
<dbReference type="EMBL" id="BT001945">
    <property type="protein sequence ID" value="AAN71944.1"/>
    <property type="molecule type" value="mRNA"/>
</dbReference>
<dbReference type="PIR" id="G85206">
    <property type="entry name" value="G85206"/>
</dbReference>
<dbReference type="PIR" id="T04532">
    <property type="entry name" value="T04532"/>
</dbReference>
<dbReference type="RefSeq" id="NP_001078406.1">
    <molecule id="O49506-2"/>
    <property type="nucleotide sequence ID" value="NM_001084937.1"/>
</dbReference>
<dbReference type="RefSeq" id="NP_001329914.1">
    <molecule id="O49506-1"/>
    <property type="nucleotide sequence ID" value="NM_001341277.1"/>
</dbReference>
<dbReference type="RefSeq" id="NP_193570.1">
    <molecule id="O49506-1"/>
    <property type="nucleotide sequence ID" value="NM_117946.3"/>
</dbReference>
<dbReference type="SMR" id="O49506"/>
<dbReference type="FunCoup" id="O49506">
    <property type="interactions" value="1358"/>
</dbReference>
<dbReference type="STRING" id="3702.O49506"/>
<dbReference type="iPTMnet" id="O49506"/>
<dbReference type="PaxDb" id="3702-AT4G18360.1"/>
<dbReference type="ProteomicsDB" id="248579">
    <molecule id="O49506-1"/>
</dbReference>
<dbReference type="EnsemblPlants" id="AT4G18360.1">
    <molecule id="O49506-1"/>
    <property type="protein sequence ID" value="AT4G18360.1"/>
    <property type="gene ID" value="AT4G18360"/>
</dbReference>
<dbReference type="EnsemblPlants" id="AT4G18360.2">
    <molecule id="O49506-2"/>
    <property type="protein sequence ID" value="AT4G18360.2"/>
    <property type="gene ID" value="AT4G18360"/>
</dbReference>
<dbReference type="EnsemblPlants" id="AT4G18360.4">
    <molecule id="O49506-1"/>
    <property type="protein sequence ID" value="AT4G18360.4"/>
    <property type="gene ID" value="AT4G18360"/>
</dbReference>
<dbReference type="GeneID" id="827563"/>
<dbReference type="Gramene" id="AT4G18360.1">
    <molecule id="O49506-1"/>
    <property type="protein sequence ID" value="AT4G18360.1"/>
    <property type="gene ID" value="AT4G18360"/>
</dbReference>
<dbReference type="Gramene" id="AT4G18360.2">
    <molecule id="O49506-2"/>
    <property type="protein sequence ID" value="AT4G18360.2"/>
    <property type="gene ID" value="AT4G18360"/>
</dbReference>
<dbReference type="Gramene" id="AT4G18360.4">
    <molecule id="O49506-1"/>
    <property type="protein sequence ID" value="AT4G18360.4"/>
    <property type="gene ID" value="AT4G18360"/>
</dbReference>
<dbReference type="KEGG" id="ath:AT4G18360"/>
<dbReference type="Araport" id="AT4G18360"/>
<dbReference type="TAIR" id="AT4G18360">
    <property type="gene designation" value="GOX3"/>
</dbReference>
<dbReference type="eggNOG" id="KOG0538">
    <property type="taxonomic scope" value="Eukaryota"/>
</dbReference>
<dbReference type="HOGENOM" id="CLU_020639_0_0_1"/>
<dbReference type="InParanoid" id="O49506"/>
<dbReference type="OMA" id="WFQLYWL"/>
<dbReference type="PhylomeDB" id="O49506"/>
<dbReference type="BioCyc" id="ARA:AT4G18360-MONOMER"/>
<dbReference type="UniPathway" id="UPA00951">
    <property type="reaction ID" value="UER00912"/>
</dbReference>
<dbReference type="CD-CODE" id="4299E36E">
    <property type="entry name" value="Nucleolus"/>
</dbReference>
<dbReference type="PRO" id="PR:O49506"/>
<dbReference type="Proteomes" id="UP000006548">
    <property type="component" value="Chromosome 4"/>
</dbReference>
<dbReference type="ExpressionAtlas" id="O49506">
    <property type="expression patterns" value="baseline and differential"/>
</dbReference>
<dbReference type="GO" id="GO:0005777">
    <property type="term" value="C:peroxisome"/>
    <property type="evidence" value="ECO:0000314"/>
    <property type="project" value="TAIR"/>
</dbReference>
<dbReference type="GO" id="GO:0003973">
    <property type="term" value="F:(S)-2-hydroxy-acid oxidase activity"/>
    <property type="evidence" value="ECO:0007669"/>
    <property type="project" value="UniProtKB-EC"/>
</dbReference>
<dbReference type="GO" id="GO:0010181">
    <property type="term" value="F:FMN binding"/>
    <property type="evidence" value="ECO:0007669"/>
    <property type="project" value="InterPro"/>
</dbReference>
<dbReference type="GO" id="GO:0042742">
    <property type="term" value="P:defense response to bacterium"/>
    <property type="evidence" value="ECO:0000315"/>
    <property type="project" value="TAIR"/>
</dbReference>
<dbReference type="GO" id="GO:0050665">
    <property type="term" value="P:hydrogen peroxide biosynthetic process"/>
    <property type="evidence" value="ECO:0000315"/>
    <property type="project" value="TAIR"/>
</dbReference>
<dbReference type="GO" id="GO:0009854">
    <property type="term" value="P:oxidative photosynthetic carbon pathway"/>
    <property type="evidence" value="ECO:0007669"/>
    <property type="project" value="UniProtKB-KW"/>
</dbReference>
<dbReference type="CDD" id="cd02809">
    <property type="entry name" value="alpha_hydroxyacid_oxid_FMN"/>
    <property type="match status" value="1"/>
</dbReference>
<dbReference type="FunFam" id="3.20.20.70:FF:000063">
    <property type="entry name" value="peroxisomal (S)-2-hydroxy-acid oxidase GLO1"/>
    <property type="match status" value="1"/>
</dbReference>
<dbReference type="Gene3D" id="3.20.20.70">
    <property type="entry name" value="Aldolase class I"/>
    <property type="match status" value="1"/>
</dbReference>
<dbReference type="InterPro" id="IPR013785">
    <property type="entry name" value="Aldolase_TIM"/>
</dbReference>
<dbReference type="InterPro" id="IPR012133">
    <property type="entry name" value="Alpha-hydoxy_acid_DH_FMN"/>
</dbReference>
<dbReference type="InterPro" id="IPR000262">
    <property type="entry name" value="FMN-dep_DH"/>
</dbReference>
<dbReference type="InterPro" id="IPR037396">
    <property type="entry name" value="FMN_HAD"/>
</dbReference>
<dbReference type="InterPro" id="IPR008259">
    <property type="entry name" value="FMN_hydac_DH_AS"/>
</dbReference>
<dbReference type="PANTHER" id="PTHR10578:SF113">
    <property type="entry name" value="GLYCOLATE OXIDASE 3"/>
    <property type="match status" value="1"/>
</dbReference>
<dbReference type="PANTHER" id="PTHR10578">
    <property type="entry name" value="S -2-HYDROXY-ACID OXIDASE-RELATED"/>
    <property type="match status" value="1"/>
</dbReference>
<dbReference type="Pfam" id="PF01070">
    <property type="entry name" value="FMN_dh"/>
    <property type="match status" value="1"/>
</dbReference>
<dbReference type="PIRSF" id="PIRSF000138">
    <property type="entry name" value="Al-hdrx_acd_dh"/>
    <property type="match status" value="1"/>
</dbReference>
<dbReference type="SUPFAM" id="SSF51395">
    <property type="entry name" value="FMN-linked oxidoreductases"/>
    <property type="match status" value="1"/>
</dbReference>
<dbReference type="PROSITE" id="PS00557">
    <property type="entry name" value="FMN_HYDROXY_ACID_DH_1"/>
    <property type="match status" value="1"/>
</dbReference>
<dbReference type="PROSITE" id="PS51349">
    <property type="entry name" value="FMN_HYDROXY_ACID_DH_2"/>
    <property type="match status" value="1"/>
</dbReference>
<feature type="chain" id="PRO_0000403408" description="Glycolate oxidase 3">
    <location>
        <begin position="1"/>
        <end position="368"/>
    </location>
</feature>
<feature type="domain" description="FMN hydroxy acid dehydrogenase" evidence="5">
    <location>
        <begin position="1"/>
        <end position="359"/>
    </location>
</feature>
<feature type="active site" description="Proton acceptor" evidence="2">
    <location>
        <position position="254"/>
    </location>
</feature>
<feature type="binding site" evidence="4">
    <location>
        <position position="24"/>
    </location>
    <ligand>
        <name>glyoxylate</name>
        <dbReference type="ChEBI" id="CHEBI:36655"/>
    </ligand>
</feature>
<feature type="binding site" evidence="2">
    <location>
        <begin position="77"/>
        <end position="79"/>
    </location>
    <ligand>
        <name>FMN</name>
        <dbReference type="ChEBI" id="CHEBI:58210"/>
    </ligand>
</feature>
<feature type="binding site" evidence="2">
    <location>
        <position position="106"/>
    </location>
    <ligand>
        <name>FMN</name>
        <dbReference type="ChEBI" id="CHEBI:58210"/>
    </ligand>
</feature>
<feature type="binding site" evidence="2">
    <location>
        <begin position="127"/>
        <end position="129"/>
    </location>
    <ligand>
        <name>FMN</name>
        <dbReference type="ChEBI" id="CHEBI:58210"/>
    </ligand>
</feature>
<feature type="binding site" evidence="4">
    <location>
        <position position="129"/>
    </location>
    <ligand>
        <name>glyoxylate</name>
        <dbReference type="ChEBI" id="CHEBI:36655"/>
    </ligand>
</feature>
<feature type="binding site" evidence="2">
    <location>
        <position position="155"/>
    </location>
    <ligand>
        <name>FMN</name>
        <dbReference type="ChEBI" id="CHEBI:58210"/>
    </ligand>
</feature>
<feature type="binding site" evidence="4">
    <location>
        <position position="164"/>
    </location>
    <ligand>
        <name>glyoxylate</name>
        <dbReference type="ChEBI" id="CHEBI:36655"/>
    </ligand>
</feature>
<feature type="binding site" evidence="2">
    <location>
        <position position="230"/>
    </location>
    <ligand>
        <name>FMN</name>
        <dbReference type="ChEBI" id="CHEBI:58210"/>
    </ligand>
</feature>
<feature type="binding site" evidence="2">
    <location>
        <position position="252"/>
    </location>
    <ligand>
        <name>FMN</name>
        <dbReference type="ChEBI" id="CHEBI:58210"/>
    </ligand>
</feature>
<feature type="binding site" evidence="4">
    <location>
        <position position="254"/>
    </location>
    <ligand>
        <name>glyoxylate</name>
        <dbReference type="ChEBI" id="CHEBI:36655"/>
    </ligand>
</feature>
<feature type="binding site" evidence="4">
    <location>
        <position position="257"/>
    </location>
    <ligand>
        <name>glyoxylate</name>
        <dbReference type="ChEBI" id="CHEBI:36655"/>
    </ligand>
</feature>
<feature type="binding site" evidence="2">
    <location>
        <begin position="285"/>
        <end position="289"/>
    </location>
    <ligand>
        <name>FMN</name>
        <dbReference type="ChEBI" id="CHEBI:58210"/>
    </ligand>
</feature>
<feature type="binding site" evidence="2">
    <location>
        <begin position="308"/>
        <end position="309"/>
    </location>
    <ligand>
        <name>FMN</name>
        <dbReference type="ChEBI" id="CHEBI:58210"/>
    </ligand>
</feature>
<feature type="site" description="Involved in determining the substrate specificity of glycolate oxidase" evidence="2">
    <location>
        <position position="108"/>
    </location>
</feature>
<feature type="modified residue" description="N-acetylmethionine" evidence="7">
    <location>
        <position position="1"/>
    </location>
</feature>
<feature type="splice variant" id="VSP_040388" description="In isoform 2." evidence="6">
    <original>GRPSLFS</original>
    <variation>SSFIIYT</variation>
    <location>
        <begin position="308"/>
        <end position="314"/>
    </location>
</feature>
<feature type="splice variant" id="VSP_040389" description="In isoform 2." evidence="6">
    <location>
        <begin position="315"/>
        <end position="368"/>
    </location>
</feature>